<protein>
    <recommendedName>
        <fullName evidence="1">GPN-loop GTPase 3</fullName>
    </recommendedName>
    <alternativeName>
        <fullName evidence="1">ATP-binding domain 1 family member C homolog</fullName>
    </alternativeName>
</protein>
<sequence length="285" mass="32514">MGKHVQLVMGPAGSGKSTYCDTMRKYCEEIKRSVHIVNLDPAAEVFEYPVSVDIKNLVTVDEVMDELHYGPNGGLVYAMEYLIENMDWLTDELGDYEDDYLIIDCPGQIELYSHIPVMRILVDHLQQIGYSVCSVFLVDSQFILDNCKFISGALMCLSAMVRLEVPHINVLTKIDVLKTSDQYKEIEKFLDLEVQNLVEELNLETHDRYHRMNKAIGSLLEDFSLVGFVPLDITDQESLNVLLQHIDNSIQYGEDLEPKEPPLENDDDDDDDEGDEIIRMMNGNL</sequence>
<accession>Q54NK8</accession>
<evidence type="ECO:0000250" key="1">
    <source>
        <dbReference type="UniProtKB" id="Q9UHW5"/>
    </source>
</evidence>
<evidence type="ECO:0000250" key="2">
    <source>
        <dbReference type="UniProtKB" id="Q9UYR9"/>
    </source>
</evidence>
<evidence type="ECO:0000256" key="3">
    <source>
        <dbReference type="SAM" id="MobiDB-lite"/>
    </source>
</evidence>
<evidence type="ECO:0000305" key="4"/>
<proteinExistence type="inferred from homology"/>
<gene>
    <name type="primary">gpn3</name>
    <name evidence="1" type="synonym">atpbd1c</name>
    <name type="ORF">DDB_G0285197</name>
</gene>
<name>GPN3_DICDI</name>
<feature type="chain" id="PRO_0000328345" description="GPN-loop GTPase 3">
    <location>
        <begin position="1"/>
        <end position="285"/>
    </location>
</feature>
<feature type="region of interest" description="Disordered" evidence="3">
    <location>
        <begin position="253"/>
        <end position="276"/>
    </location>
</feature>
<feature type="short sequence motif" description="Gly-Pro-Asn (GPN)-loop; involved in dimer interface" evidence="2">
    <location>
        <begin position="70"/>
        <end position="72"/>
    </location>
</feature>
<feature type="compositionally biased region" description="Acidic residues" evidence="3">
    <location>
        <begin position="263"/>
        <end position="275"/>
    </location>
</feature>
<feature type="binding site" evidence="2">
    <location>
        <begin position="13"/>
        <end position="18"/>
    </location>
    <ligand>
        <name>GTP</name>
        <dbReference type="ChEBI" id="CHEBI:37565"/>
    </ligand>
</feature>
<feature type="binding site" evidence="2">
    <location>
        <begin position="172"/>
        <end position="175"/>
    </location>
    <ligand>
        <name>GTP</name>
        <dbReference type="ChEBI" id="CHEBI:37565"/>
    </ligand>
</feature>
<feature type="site" description="Stabilizes the phosphate intermediate; shared with dimeric partner" evidence="2">
    <location>
        <position position="72"/>
    </location>
</feature>
<reference key="1">
    <citation type="journal article" date="2005" name="Nature">
        <title>The genome of the social amoeba Dictyostelium discoideum.</title>
        <authorList>
            <person name="Eichinger L."/>
            <person name="Pachebat J.A."/>
            <person name="Gloeckner G."/>
            <person name="Rajandream M.A."/>
            <person name="Sucgang R."/>
            <person name="Berriman M."/>
            <person name="Song J."/>
            <person name="Olsen R."/>
            <person name="Szafranski K."/>
            <person name="Xu Q."/>
            <person name="Tunggal B."/>
            <person name="Kummerfeld S."/>
            <person name="Madera M."/>
            <person name="Konfortov B.A."/>
            <person name="Rivero F."/>
            <person name="Bankier A.T."/>
            <person name="Lehmann R."/>
            <person name="Hamlin N."/>
            <person name="Davies R."/>
            <person name="Gaudet P."/>
            <person name="Fey P."/>
            <person name="Pilcher K."/>
            <person name="Chen G."/>
            <person name="Saunders D."/>
            <person name="Sodergren E.J."/>
            <person name="Davis P."/>
            <person name="Kerhornou A."/>
            <person name="Nie X."/>
            <person name="Hall N."/>
            <person name="Anjard C."/>
            <person name="Hemphill L."/>
            <person name="Bason N."/>
            <person name="Farbrother P."/>
            <person name="Desany B."/>
            <person name="Just E."/>
            <person name="Morio T."/>
            <person name="Rost R."/>
            <person name="Churcher C.M."/>
            <person name="Cooper J."/>
            <person name="Haydock S."/>
            <person name="van Driessche N."/>
            <person name="Cronin A."/>
            <person name="Goodhead I."/>
            <person name="Muzny D.M."/>
            <person name="Mourier T."/>
            <person name="Pain A."/>
            <person name="Lu M."/>
            <person name="Harper D."/>
            <person name="Lindsay R."/>
            <person name="Hauser H."/>
            <person name="James K.D."/>
            <person name="Quiles M."/>
            <person name="Madan Babu M."/>
            <person name="Saito T."/>
            <person name="Buchrieser C."/>
            <person name="Wardroper A."/>
            <person name="Felder M."/>
            <person name="Thangavelu M."/>
            <person name="Johnson D."/>
            <person name="Knights A."/>
            <person name="Loulseged H."/>
            <person name="Mungall K.L."/>
            <person name="Oliver K."/>
            <person name="Price C."/>
            <person name="Quail M.A."/>
            <person name="Urushihara H."/>
            <person name="Hernandez J."/>
            <person name="Rabbinowitsch E."/>
            <person name="Steffen D."/>
            <person name="Sanders M."/>
            <person name="Ma J."/>
            <person name="Kohara Y."/>
            <person name="Sharp S."/>
            <person name="Simmonds M.N."/>
            <person name="Spiegler S."/>
            <person name="Tivey A."/>
            <person name="Sugano S."/>
            <person name="White B."/>
            <person name="Walker D."/>
            <person name="Woodward J.R."/>
            <person name="Winckler T."/>
            <person name="Tanaka Y."/>
            <person name="Shaulsky G."/>
            <person name="Schleicher M."/>
            <person name="Weinstock G.M."/>
            <person name="Rosenthal A."/>
            <person name="Cox E.C."/>
            <person name="Chisholm R.L."/>
            <person name="Gibbs R.A."/>
            <person name="Loomis W.F."/>
            <person name="Platzer M."/>
            <person name="Kay R.R."/>
            <person name="Williams J.G."/>
            <person name="Dear P.H."/>
            <person name="Noegel A.A."/>
            <person name="Barrell B.G."/>
            <person name="Kuspa A."/>
        </authorList>
    </citation>
    <scope>NUCLEOTIDE SEQUENCE [LARGE SCALE GENOMIC DNA]</scope>
    <source>
        <strain>AX4</strain>
    </source>
</reference>
<keyword id="KW-0342">GTP-binding</keyword>
<keyword id="KW-0378">Hydrolase</keyword>
<keyword id="KW-0547">Nucleotide-binding</keyword>
<keyword id="KW-1185">Reference proteome</keyword>
<organism>
    <name type="scientific">Dictyostelium discoideum</name>
    <name type="common">Social amoeba</name>
    <dbReference type="NCBI Taxonomy" id="44689"/>
    <lineage>
        <taxon>Eukaryota</taxon>
        <taxon>Amoebozoa</taxon>
        <taxon>Evosea</taxon>
        <taxon>Eumycetozoa</taxon>
        <taxon>Dictyostelia</taxon>
        <taxon>Dictyosteliales</taxon>
        <taxon>Dictyosteliaceae</taxon>
        <taxon>Dictyostelium</taxon>
    </lineage>
</organism>
<comment type="function">
    <text evidence="1">Small GTPase required for proper localization of RNA polymerase II (RNAPII). May act at an RNAP assembly step prior to nuclear import.</text>
</comment>
<comment type="subunit">
    <text evidence="1">Heterodimer with gpn1. Binds to RNA polymerase II (RNAPII).</text>
</comment>
<comment type="similarity">
    <text evidence="4">Belongs to the GPN-loop GTPase family.</text>
</comment>
<dbReference type="EMBL" id="AAFI02000075">
    <property type="protein sequence ID" value="EAL64855.1"/>
    <property type="molecule type" value="Genomic_DNA"/>
</dbReference>
<dbReference type="RefSeq" id="XP_638354.1">
    <property type="nucleotide sequence ID" value="XM_633262.1"/>
</dbReference>
<dbReference type="SMR" id="Q54NK8"/>
<dbReference type="FunCoup" id="Q54NK8">
    <property type="interactions" value="521"/>
</dbReference>
<dbReference type="STRING" id="44689.Q54NK8"/>
<dbReference type="PaxDb" id="44689-DDB0233478"/>
<dbReference type="EnsemblProtists" id="EAL64855">
    <property type="protein sequence ID" value="EAL64855"/>
    <property type="gene ID" value="DDB_G0285197"/>
</dbReference>
<dbReference type="GeneID" id="8624979"/>
<dbReference type="KEGG" id="ddi:DDB_G0285197"/>
<dbReference type="dictyBase" id="DDB_G0285197">
    <property type="gene designation" value="gpn3"/>
</dbReference>
<dbReference type="VEuPathDB" id="AmoebaDB:DDB_G0285197"/>
<dbReference type="eggNOG" id="KOG1534">
    <property type="taxonomic scope" value="Eukaryota"/>
</dbReference>
<dbReference type="HOGENOM" id="CLU_037460_0_0_1"/>
<dbReference type="InParanoid" id="Q54NK8"/>
<dbReference type="OMA" id="LYTHMTV"/>
<dbReference type="PhylomeDB" id="Q54NK8"/>
<dbReference type="PRO" id="PR:Q54NK8"/>
<dbReference type="Proteomes" id="UP000002195">
    <property type="component" value="Chromosome 4"/>
</dbReference>
<dbReference type="GO" id="GO:0005525">
    <property type="term" value="F:GTP binding"/>
    <property type="evidence" value="ECO:0007669"/>
    <property type="project" value="UniProtKB-KW"/>
</dbReference>
<dbReference type="GO" id="GO:0003924">
    <property type="term" value="F:GTPase activity"/>
    <property type="evidence" value="ECO:0000318"/>
    <property type="project" value="GO_Central"/>
</dbReference>
<dbReference type="CDD" id="cd17872">
    <property type="entry name" value="GPN3"/>
    <property type="match status" value="1"/>
</dbReference>
<dbReference type="FunFam" id="3.40.50.300:FF:000616">
    <property type="entry name" value="GPN-loop GTPase 3"/>
    <property type="match status" value="1"/>
</dbReference>
<dbReference type="Gene3D" id="3.40.50.300">
    <property type="entry name" value="P-loop containing nucleotide triphosphate hydrolases"/>
    <property type="match status" value="1"/>
</dbReference>
<dbReference type="InterPro" id="IPR004130">
    <property type="entry name" value="Gpn"/>
</dbReference>
<dbReference type="InterPro" id="IPR030228">
    <property type="entry name" value="Gpn3"/>
</dbReference>
<dbReference type="InterPro" id="IPR027417">
    <property type="entry name" value="P-loop_NTPase"/>
</dbReference>
<dbReference type="PANTHER" id="PTHR21231:SF7">
    <property type="entry name" value="GPN-LOOP GTPASE 3"/>
    <property type="match status" value="1"/>
</dbReference>
<dbReference type="PANTHER" id="PTHR21231">
    <property type="entry name" value="XPA-BINDING PROTEIN 1-RELATED"/>
    <property type="match status" value="1"/>
</dbReference>
<dbReference type="Pfam" id="PF03029">
    <property type="entry name" value="ATP_bind_1"/>
    <property type="match status" value="1"/>
</dbReference>
<dbReference type="SUPFAM" id="SSF52540">
    <property type="entry name" value="P-loop containing nucleoside triphosphate hydrolases"/>
    <property type="match status" value="1"/>
</dbReference>